<gene>
    <name evidence="1" type="primary">uspB</name>
    <name type="ordered locus">VP0078</name>
</gene>
<sequence length="107" mass="12295">MISGDTILFALMVVTGVNMIRYLTALRSLIYIMREAHPLLYQQVDGNGFFTTHGNVTKQVRLFHYIKSKEYHHHHDEIFTGKCERVRELFVLSTALLGVTLLAAFIL</sequence>
<evidence type="ECO:0000255" key="1">
    <source>
        <dbReference type="HAMAP-Rule" id="MF_01088"/>
    </source>
</evidence>
<name>USPB_VIBPA</name>
<keyword id="KW-0997">Cell inner membrane</keyword>
<keyword id="KW-1003">Cell membrane</keyword>
<keyword id="KW-0472">Membrane</keyword>
<keyword id="KW-0812">Transmembrane</keyword>
<keyword id="KW-1133">Transmembrane helix</keyword>
<comment type="subcellular location">
    <subcellularLocation>
        <location evidence="1">Cell inner membrane</location>
        <topology evidence="1">Multi-pass membrane protein</topology>
    </subcellularLocation>
</comment>
<comment type="similarity">
    <text evidence="1">Belongs to the universal stress protein B family.</text>
</comment>
<organism>
    <name type="scientific">Vibrio parahaemolyticus serotype O3:K6 (strain RIMD 2210633)</name>
    <dbReference type="NCBI Taxonomy" id="223926"/>
    <lineage>
        <taxon>Bacteria</taxon>
        <taxon>Pseudomonadati</taxon>
        <taxon>Pseudomonadota</taxon>
        <taxon>Gammaproteobacteria</taxon>
        <taxon>Vibrionales</taxon>
        <taxon>Vibrionaceae</taxon>
        <taxon>Vibrio</taxon>
    </lineage>
</organism>
<feature type="chain" id="PRO_0000212051" description="Universal stress protein B homolog">
    <location>
        <begin position="1"/>
        <end position="107"/>
    </location>
</feature>
<feature type="transmembrane region" description="Helical" evidence="1">
    <location>
        <begin position="6"/>
        <end position="26"/>
    </location>
</feature>
<feature type="transmembrane region" description="Helical" evidence="1">
    <location>
        <begin position="86"/>
        <end position="106"/>
    </location>
</feature>
<dbReference type="EMBL" id="BA000031">
    <property type="protein sequence ID" value="BAC58341.1"/>
    <property type="molecule type" value="Genomic_DNA"/>
</dbReference>
<dbReference type="RefSeq" id="NP_796457.1">
    <property type="nucleotide sequence ID" value="NC_004603.1"/>
</dbReference>
<dbReference type="RefSeq" id="WP_005394407.1">
    <property type="nucleotide sequence ID" value="NC_004603.1"/>
</dbReference>
<dbReference type="DNASU" id="1187545"/>
<dbReference type="GeneID" id="57842104"/>
<dbReference type="KEGG" id="vpa:VP0078"/>
<dbReference type="PATRIC" id="fig|223926.6.peg.74"/>
<dbReference type="eggNOG" id="ENOG502ZP3V">
    <property type="taxonomic scope" value="Bacteria"/>
</dbReference>
<dbReference type="HOGENOM" id="CLU_151816_0_0_6"/>
<dbReference type="Proteomes" id="UP000002493">
    <property type="component" value="Chromosome 1"/>
</dbReference>
<dbReference type="GO" id="GO:0005886">
    <property type="term" value="C:plasma membrane"/>
    <property type="evidence" value="ECO:0007669"/>
    <property type="project" value="UniProtKB-SubCell"/>
</dbReference>
<dbReference type="HAMAP" id="MF_01088">
    <property type="entry name" value="UspB"/>
    <property type="match status" value="1"/>
</dbReference>
<dbReference type="InterPro" id="IPR019598">
    <property type="entry name" value="Universal_stress_protein_B"/>
</dbReference>
<dbReference type="NCBIfam" id="NF003435">
    <property type="entry name" value="PRK04960.1"/>
    <property type="match status" value="1"/>
</dbReference>
<dbReference type="Pfam" id="PF10625">
    <property type="entry name" value="UspB"/>
    <property type="match status" value="1"/>
</dbReference>
<accession>Q87TJ1</accession>
<reference key="1">
    <citation type="journal article" date="2003" name="Lancet">
        <title>Genome sequence of Vibrio parahaemolyticus: a pathogenic mechanism distinct from that of V. cholerae.</title>
        <authorList>
            <person name="Makino K."/>
            <person name="Oshima K."/>
            <person name="Kurokawa K."/>
            <person name="Yokoyama K."/>
            <person name="Uda T."/>
            <person name="Tagomori K."/>
            <person name="Iijima Y."/>
            <person name="Najima M."/>
            <person name="Nakano M."/>
            <person name="Yamashita A."/>
            <person name="Kubota Y."/>
            <person name="Kimura S."/>
            <person name="Yasunaga T."/>
            <person name="Honda T."/>
            <person name="Shinagawa H."/>
            <person name="Hattori M."/>
            <person name="Iida T."/>
        </authorList>
    </citation>
    <scope>NUCLEOTIDE SEQUENCE [LARGE SCALE GENOMIC DNA]</scope>
    <source>
        <strain>RIMD 2210633</strain>
    </source>
</reference>
<protein>
    <recommendedName>
        <fullName evidence="1">Universal stress protein B homolog</fullName>
    </recommendedName>
</protein>
<proteinExistence type="inferred from homology"/>